<organism>
    <name type="scientific">Mus musculus</name>
    <name type="common">Mouse</name>
    <dbReference type="NCBI Taxonomy" id="10090"/>
    <lineage>
        <taxon>Eukaryota</taxon>
        <taxon>Metazoa</taxon>
        <taxon>Chordata</taxon>
        <taxon>Craniata</taxon>
        <taxon>Vertebrata</taxon>
        <taxon>Euteleostomi</taxon>
        <taxon>Mammalia</taxon>
        <taxon>Eutheria</taxon>
        <taxon>Euarchontoglires</taxon>
        <taxon>Glires</taxon>
        <taxon>Rodentia</taxon>
        <taxon>Myomorpha</taxon>
        <taxon>Muroidea</taxon>
        <taxon>Muridae</taxon>
        <taxon>Murinae</taxon>
        <taxon>Mus</taxon>
        <taxon>Mus</taxon>
    </lineage>
</organism>
<gene>
    <name evidence="8" type="primary">Ch25h</name>
</gene>
<accession>Q9Z0F5</accession>
<accession>Q3TUM6</accession>
<accession>Q8CHQ2</accession>
<keyword id="KW-0256">Endoplasmic reticulum</keyword>
<keyword id="KW-0325">Glycoprotein</keyword>
<keyword id="KW-0408">Iron</keyword>
<keyword id="KW-0444">Lipid biosynthesis</keyword>
<keyword id="KW-0443">Lipid metabolism</keyword>
<keyword id="KW-0472">Membrane</keyword>
<keyword id="KW-0479">Metal-binding</keyword>
<keyword id="KW-0503">Monooxygenase</keyword>
<keyword id="KW-0560">Oxidoreductase</keyword>
<keyword id="KW-1185">Reference proteome</keyword>
<keyword id="KW-0752">Steroid biosynthesis</keyword>
<keyword id="KW-0753">Steroid metabolism</keyword>
<keyword id="KW-0756">Sterol biosynthesis</keyword>
<keyword id="KW-1207">Sterol metabolism</keyword>
<keyword id="KW-0812">Transmembrane</keyword>
<keyword id="KW-1133">Transmembrane helix</keyword>
<proteinExistence type="evidence at protein level"/>
<feature type="chain" id="PRO_0000226802" description="Cholesterol 25-hydroxylase">
    <location>
        <begin position="1"/>
        <end position="298"/>
    </location>
</feature>
<feature type="transmembrane region" description="Helical" evidence="2">
    <location>
        <begin position="38"/>
        <end position="58"/>
    </location>
</feature>
<feature type="transmembrane region" description="Helical" evidence="2">
    <location>
        <begin position="88"/>
        <end position="108"/>
    </location>
</feature>
<feature type="transmembrane region" description="Helical" evidence="2">
    <location>
        <begin position="124"/>
        <end position="144"/>
    </location>
</feature>
<feature type="domain" description="Fatty acid hydroxylase" evidence="2">
    <location>
        <begin position="128"/>
        <end position="263"/>
    </location>
</feature>
<feature type="short sequence motif" description="Histidine box-1">
    <location>
        <begin position="142"/>
        <end position="146"/>
    </location>
</feature>
<feature type="short sequence motif" description="Histidine box-2">
    <location>
        <begin position="157"/>
        <end position="161"/>
    </location>
</feature>
<feature type="short sequence motif" description="Histidine box-3">
    <location>
        <begin position="238"/>
        <end position="244"/>
    </location>
</feature>
<feature type="glycosylation site" description="N-linked (GlcNAc...) asparagine" evidence="2">
    <location>
        <position position="5"/>
    </location>
</feature>
<feature type="glycosylation site" description="N-linked (GlcNAc...) asparagine" evidence="2">
    <location>
        <position position="163"/>
    </location>
</feature>
<feature type="mutagenesis site" description="Loss of function." evidence="6">
    <original>HH</original>
    <variation>EE</variation>
    <location>
        <begin position="242"/>
        <end position="243"/>
    </location>
</feature>
<feature type="sequence conflict" description="In Ref. 3; AAH39919." evidence="7" ref="3">
    <original>V</original>
    <variation>A</variation>
    <location>
        <position position="122"/>
    </location>
</feature>
<feature type="sequence conflict" description="In Ref. 2; BAE35945." evidence="7" ref="2">
    <original>T</original>
    <variation>S</variation>
    <location>
        <position position="199"/>
    </location>
</feature>
<feature type="sequence conflict" description="In Ref. 3; AAH39919." evidence="7" ref="3">
    <original>N</original>
    <variation>D</variation>
    <location>
        <position position="282"/>
    </location>
</feature>
<evidence type="ECO:0000250" key="1">
    <source>
        <dbReference type="UniProtKB" id="O95992"/>
    </source>
</evidence>
<evidence type="ECO:0000255" key="2"/>
<evidence type="ECO:0000269" key="3">
    <source>
    </source>
</evidence>
<evidence type="ECO:0000269" key="4">
    <source>
    </source>
</evidence>
<evidence type="ECO:0000269" key="5">
    <source>
    </source>
</evidence>
<evidence type="ECO:0000269" key="6">
    <source>
    </source>
</evidence>
<evidence type="ECO:0000305" key="7"/>
<evidence type="ECO:0000312" key="8">
    <source>
        <dbReference type="MGI" id="MGI:1333869"/>
    </source>
</evidence>
<protein>
    <recommendedName>
        <fullName evidence="7">Cholesterol 25-hydroxylase</fullName>
        <ecNumber evidence="6">1.14.99.38</ecNumber>
    </recommendedName>
    <alternativeName>
        <fullName>Cholesterol 25-monooxygenase</fullName>
        <shortName>m25OH</shortName>
    </alternativeName>
</protein>
<sequence length="298" mass="34672">MGCYNGSELQDLGCSSQLLLQPLWDTIRTREAFTRSPIFPVTFSIITYVGFCLPFVVLDVLYPWVPILRRYKIHPDFSPSVKQLLPCLGLTLYQHLVFVFPVTLLHWVRSPALLPQEAPELVQLLSHVLICLLLFDTEIFAWHLLHHKVPWLYRTFHKVHHQNSSSFALATQYMSFWELLSLTFFDVLNVAVLRCHPLTIFTFHVINIWLSVEDHSGYDFPWSTHRLVPFGWYGGVAHHDMHHSQFNCNFAPYFTHWDKMLGTLRSAPLPESLCACGERCVNSRERCAVHLIQKKKQT</sequence>
<name>CH25H_MOUSE</name>
<comment type="function">
    <text evidence="1 4 5 6">Catalyzes the formation of 25-hydroxycholesterol from cholesterol, leading to repress cholesterol biosynthetic enzymes (PubMed:29033131, PubMed:9852097). Plays a key role in cell positioning and movement in lymphoid tissues: 25-hydroxycholesterol is an intermediate in biosynthesis of 7-alpha,25-dihydroxycholesterol (7-alpha,25-OHC), an oxysterol that acts as a ligand for the G protein-coupled receptor GPR183/EBI2, a chemotactic receptor for a number of lymphoid cells (PubMed:22999953). May play an important role in regulating lipid metabolism by synthesizing a corepressor that blocks sterol regulatory element binding protein (SREBP) processing (PubMed:9852097). In testis, production of 25-hydroxycholesterol by macrophages may play a role in Leydig cell differentiation (PubMed:9852097). Required to restrain inflammation in macrophages: production of 25-hydroxycholesterol protects macrophages from cholesterol overload, thereby preventing mitochondrial DNA release and subsequent activation of the AIM2 inflammasome (PubMed:29033131). Interferon-stimulated gene which has broad antiviral activities against a wide range of enveloped viruses (By similarity).</text>
</comment>
<comment type="catalytic activity">
    <reaction evidence="6">
        <text>cholesterol + AH2 + O2 = 25-hydroxycholesterol + A + H2O</text>
        <dbReference type="Rhea" id="RHEA:21104"/>
        <dbReference type="ChEBI" id="CHEBI:13193"/>
        <dbReference type="ChEBI" id="CHEBI:15377"/>
        <dbReference type="ChEBI" id="CHEBI:15379"/>
        <dbReference type="ChEBI" id="CHEBI:16113"/>
        <dbReference type="ChEBI" id="CHEBI:17499"/>
        <dbReference type="ChEBI" id="CHEBI:42977"/>
        <dbReference type="EC" id="1.14.99.38"/>
    </reaction>
    <physiologicalReaction direction="left-to-right" evidence="6">
        <dbReference type="Rhea" id="RHEA:21105"/>
    </physiologicalReaction>
</comment>
<comment type="catalytic activity">
    <reaction evidence="6">
        <text>cholesterol + NADPH + O2 + H(+) = 25-hydroxycholesterol + NADP(+) + H2O</text>
        <dbReference type="Rhea" id="RHEA:46132"/>
        <dbReference type="ChEBI" id="CHEBI:15377"/>
        <dbReference type="ChEBI" id="CHEBI:15378"/>
        <dbReference type="ChEBI" id="CHEBI:15379"/>
        <dbReference type="ChEBI" id="CHEBI:16113"/>
        <dbReference type="ChEBI" id="CHEBI:42977"/>
        <dbReference type="ChEBI" id="CHEBI:57783"/>
        <dbReference type="ChEBI" id="CHEBI:58349"/>
    </reaction>
    <physiologicalReaction direction="left-to-right" evidence="6">
        <dbReference type="Rhea" id="RHEA:46133"/>
    </physiologicalReaction>
</comment>
<comment type="cofactor">
    <cofactor evidence="6">
        <name>Fe cation</name>
        <dbReference type="ChEBI" id="CHEBI:24875"/>
    </cofactor>
</comment>
<comment type="subcellular location">
    <subcellularLocation>
        <location evidence="6">Endoplasmic reticulum membrane</location>
        <topology evidence="6">Multi-pass membrane protein</topology>
    </subcellularLocation>
</comment>
<comment type="tissue specificity">
    <text evidence="6">Widely expressed at low level and at higher level in the lung. Weakly expressed in the heart, lung and kidney.</text>
</comment>
<comment type="PTM">
    <text evidence="6">N-glycosylated.</text>
</comment>
<comment type="disruption phenotype">
    <text evidence="3 5">Mice do not display any apparent alteration in bile acid synthesis and cholesterol metabolism (PubMed:12543708). Macrophages however display impaired mitochondrial metabolism, due to increased cholesterol that triggers cytosolic mitochondrial DNA release and subsequent activation of the AIM2 inflammasome (PubMed:29033131).</text>
</comment>
<comment type="similarity">
    <text evidence="7">Belongs to the sterol desaturase family.</text>
</comment>
<dbReference type="EC" id="1.14.99.38" evidence="6"/>
<dbReference type="EMBL" id="AF059211">
    <property type="protein sequence ID" value="AAC97480.1"/>
    <property type="molecule type" value="Genomic_DNA"/>
</dbReference>
<dbReference type="EMBL" id="AF059213">
    <property type="protein sequence ID" value="AAC97482.1"/>
    <property type="molecule type" value="mRNA"/>
</dbReference>
<dbReference type="EMBL" id="AK140360">
    <property type="protein sequence ID" value="BAE24352.1"/>
    <property type="molecule type" value="mRNA"/>
</dbReference>
<dbReference type="EMBL" id="AK152770">
    <property type="protein sequence ID" value="BAE31482.1"/>
    <property type="molecule type" value="mRNA"/>
</dbReference>
<dbReference type="EMBL" id="AK160657">
    <property type="protein sequence ID" value="BAE35945.1"/>
    <property type="molecule type" value="mRNA"/>
</dbReference>
<dbReference type="EMBL" id="BC039919">
    <property type="protein sequence ID" value="AAH39919.1"/>
    <property type="molecule type" value="mRNA"/>
</dbReference>
<dbReference type="CCDS" id="CCDS29759.1"/>
<dbReference type="RefSeq" id="NP_034020.1">
    <property type="nucleotide sequence ID" value="NM_009890.2"/>
</dbReference>
<dbReference type="FunCoup" id="Q9Z0F5">
    <property type="interactions" value="20"/>
</dbReference>
<dbReference type="STRING" id="10090.ENSMUSP00000049683"/>
<dbReference type="SwissLipids" id="SLP:000001484"/>
<dbReference type="GlyCosmos" id="Q9Z0F5">
    <property type="glycosylation" value="2 sites, No reported glycans"/>
</dbReference>
<dbReference type="GlyGen" id="Q9Z0F5">
    <property type="glycosylation" value="2 sites"/>
</dbReference>
<dbReference type="PaxDb" id="10090-ENSMUSP00000049683"/>
<dbReference type="ProteomicsDB" id="281121"/>
<dbReference type="Antibodypedia" id="30238">
    <property type="antibodies" value="104 antibodies from 16 providers"/>
</dbReference>
<dbReference type="DNASU" id="12642"/>
<dbReference type="Ensembl" id="ENSMUST00000050562.6">
    <property type="protein sequence ID" value="ENSMUSP00000049683.5"/>
    <property type="gene ID" value="ENSMUSG00000050370.6"/>
</dbReference>
<dbReference type="GeneID" id="12642"/>
<dbReference type="KEGG" id="mmu:12642"/>
<dbReference type="UCSC" id="uc008hgj.1">
    <property type="organism name" value="mouse"/>
</dbReference>
<dbReference type="AGR" id="MGI:1333869"/>
<dbReference type="CTD" id="9023"/>
<dbReference type="MGI" id="MGI:1333869">
    <property type="gene designation" value="Ch25h"/>
</dbReference>
<dbReference type="VEuPathDB" id="HostDB:ENSMUSG00000050370"/>
<dbReference type="eggNOG" id="KOG0873">
    <property type="taxonomic scope" value="Eukaryota"/>
</dbReference>
<dbReference type="GeneTree" id="ENSGT00940000162142"/>
<dbReference type="HOGENOM" id="CLU_047036_5_1_1"/>
<dbReference type="InParanoid" id="Q9Z0F5"/>
<dbReference type="OMA" id="VPWLYKT"/>
<dbReference type="OrthoDB" id="1658724at2759"/>
<dbReference type="PhylomeDB" id="Q9Z0F5"/>
<dbReference type="TreeFam" id="TF353265"/>
<dbReference type="BRENDA" id="1.14.99.38">
    <property type="organism ID" value="3474"/>
</dbReference>
<dbReference type="Reactome" id="R-MMU-192105">
    <property type="pathway name" value="Synthesis of bile acids and bile salts"/>
</dbReference>
<dbReference type="BioGRID-ORCS" id="12642">
    <property type="hits" value="3 hits in 78 CRISPR screens"/>
</dbReference>
<dbReference type="PRO" id="PR:Q9Z0F5"/>
<dbReference type="Proteomes" id="UP000000589">
    <property type="component" value="Chromosome 19"/>
</dbReference>
<dbReference type="RNAct" id="Q9Z0F5">
    <property type="molecule type" value="protein"/>
</dbReference>
<dbReference type="Bgee" id="ENSMUSG00000050370">
    <property type="expression patterns" value="Expressed in ciliary body and 64 other cell types or tissues"/>
</dbReference>
<dbReference type="GO" id="GO:0005789">
    <property type="term" value="C:endoplasmic reticulum membrane"/>
    <property type="evidence" value="ECO:0007669"/>
    <property type="project" value="UniProtKB-SubCell"/>
</dbReference>
<dbReference type="GO" id="GO:0001567">
    <property type="term" value="F:cholesterol 25-hydroxylase activity"/>
    <property type="evidence" value="ECO:0000314"/>
    <property type="project" value="UniProtKB"/>
</dbReference>
<dbReference type="GO" id="GO:0005506">
    <property type="term" value="F:iron ion binding"/>
    <property type="evidence" value="ECO:0007669"/>
    <property type="project" value="InterPro"/>
</dbReference>
<dbReference type="GO" id="GO:0008395">
    <property type="term" value="F:steroid hydroxylase activity"/>
    <property type="evidence" value="ECO:0000314"/>
    <property type="project" value="MGI"/>
</dbReference>
<dbReference type="GO" id="GO:0035754">
    <property type="term" value="P:B cell chemotaxis"/>
    <property type="evidence" value="ECO:0000315"/>
    <property type="project" value="UniProtKB"/>
</dbReference>
<dbReference type="GO" id="GO:0008203">
    <property type="term" value="P:cholesterol metabolic process"/>
    <property type="evidence" value="ECO:0000314"/>
    <property type="project" value="MGI"/>
</dbReference>
<dbReference type="GO" id="GO:0090206">
    <property type="term" value="P:negative regulation of cholesterol metabolic process"/>
    <property type="evidence" value="ECO:0000314"/>
    <property type="project" value="UniProtKB"/>
</dbReference>
<dbReference type="GO" id="GO:1903914">
    <property type="term" value="P:negative regulation of fusion of virus membrane with host plasma membrane"/>
    <property type="evidence" value="ECO:0000250"/>
    <property type="project" value="UniProtKB"/>
</dbReference>
<dbReference type="GO" id="GO:0034340">
    <property type="term" value="P:response to type I interferon"/>
    <property type="evidence" value="ECO:0000250"/>
    <property type="project" value="UniProtKB"/>
</dbReference>
<dbReference type="GO" id="GO:0016126">
    <property type="term" value="P:sterol biosynthetic process"/>
    <property type="evidence" value="ECO:0007669"/>
    <property type="project" value="UniProtKB-KW"/>
</dbReference>
<dbReference type="InterPro" id="IPR006694">
    <property type="entry name" value="Fatty_acid_hydroxylase"/>
</dbReference>
<dbReference type="InterPro" id="IPR050307">
    <property type="entry name" value="Sterol_Desaturase_Related"/>
</dbReference>
<dbReference type="PANTHER" id="PTHR11863">
    <property type="entry name" value="STEROL DESATURASE"/>
    <property type="match status" value="1"/>
</dbReference>
<dbReference type="Pfam" id="PF04116">
    <property type="entry name" value="FA_hydroxylase"/>
    <property type="match status" value="1"/>
</dbReference>
<reference key="1">
    <citation type="journal article" date="1998" name="J. Biol. Chem.">
        <title>cDNA cloning of mouse and human cholesterol 25-hydroxylases, polytopic membrane proteins that synthesize a potent oxysterol regulator of lipid metabolism.</title>
        <authorList>
            <person name="Lund E.G."/>
            <person name="Kerr T.A."/>
            <person name="Sakai J."/>
            <person name="Li W.-P."/>
            <person name="Russell D.W."/>
        </authorList>
    </citation>
    <scope>NUCLEOTIDE SEQUENCE [GENOMIC DNA / MRNA]</scope>
    <scope>FUNCTION</scope>
    <scope>CATALYTIC ACTIVITY</scope>
    <scope>COFACTOR</scope>
    <scope>SUBCELLULAR LOCATION</scope>
    <scope>GLYCOSYLATION</scope>
    <scope>TISSUE SPECIFICITY</scope>
    <scope>MUTAGENESIS OF 242-HIS-HIS-243</scope>
    <source>
        <strain>129/SvEv</strain>
        <strain>C57BL/6J</strain>
    </source>
</reference>
<reference key="2">
    <citation type="journal article" date="2005" name="Science">
        <title>The transcriptional landscape of the mammalian genome.</title>
        <authorList>
            <person name="Carninci P."/>
            <person name="Kasukawa T."/>
            <person name="Katayama S."/>
            <person name="Gough J."/>
            <person name="Frith M.C."/>
            <person name="Maeda N."/>
            <person name="Oyama R."/>
            <person name="Ravasi T."/>
            <person name="Lenhard B."/>
            <person name="Wells C."/>
            <person name="Kodzius R."/>
            <person name="Shimokawa K."/>
            <person name="Bajic V.B."/>
            <person name="Brenner S.E."/>
            <person name="Batalov S."/>
            <person name="Forrest A.R."/>
            <person name="Zavolan M."/>
            <person name="Davis M.J."/>
            <person name="Wilming L.G."/>
            <person name="Aidinis V."/>
            <person name="Allen J.E."/>
            <person name="Ambesi-Impiombato A."/>
            <person name="Apweiler R."/>
            <person name="Aturaliya R.N."/>
            <person name="Bailey T.L."/>
            <person name="Bansal M."/>
            <person name="Baxter L."/>
            <person name="Beisel K.W."/>
            <person name="Bersano T."/>
            <person name="Bono H."/>
            <person name="Chalk A.M."/>
            <person name="Chiu K.P."/>
            <person name="Choudhary V."/>
            <person name="Christoffels A."/>
            <person name="Clutterbuck D.R."/>
            <person name="Crowe M.L."/>
            <person name="Dalla E."/>
            <person name="Dalrymple B.P."/>
            <person name="de Bono B."/>
            <person name="Della Gatta G."/>
            <person name="di Bernardo D."/>
            <person name="Down T."/>
            <person name="Engstrom P."/>
            <person name="Fagiolini M."/>
            <person name="Faulkner G."/>
            <person name="Fletcher C.F."/>
            <person name="Fukushima T."/>
            <person name="Furuno M."/>
            <person name="Futaki S."/>
            <person name="Gariboldi M."/>
            <person name="Georgii-Hemming P."/>
            <person name="Gingeras T.R."/>
            <person name="Gojobori T."/>
            <person name="Green R.E."/>
            <person name="Gustincich S."/>
            <person name="Harbers M."/>
            <person name="Hayashi Y."/>
            <person name="Hensch T.K."/>
            <person name="Hirokawa N."/>
            <person name="Hill D."/>
            <person name="Huminiecki L."/>
            <person name="Iacono M."/>
            <person name="Ikeo K."/>
            <person name="Iwama A."/>
            <person name="Ishikawa T."/>
            <person name="Jakt M."/>
            <person name="Kanapin A."/>
            <person name="Katoh M."/>
            <person name="Kawasawa Y."/>
            <person name="Kelso J."/>
            <person name="Kitamura H."/>
            <person name="Kitano H."/>
            <person name="Kollias G."/>
            <person name="Krishnan S.P."/>
            <person name="Kruger A."/>
            <person name="Kummerfeld S.K."/>
            <person name="Kurochkin I.V."/>
            <person name="Lareau L.F."/>
            <person name="Lazarevic D."/>
            <person name="Lipovich L."/>
            <person name="Liu J."/>
            <person name="Liuni S."/>
            <person name="McWilliam S."/>
            <person name="Madan Babu M."/>
            <person name="Madera M."/>
            <person name="Marchionni L."/>
            <person name="Matsuda H."/>
            <person name="Matsuzawa S."/>
            <person name="Miki H."/>
            <person name="Mignone F."/>
            <person name="Miyake S."/>
            <person name="Morris K."/>
            <person name="Mottagui-Tabar S."/>
            <person name="Mulder N."/>
            <person name="Nakano N."/>
            <person name="Nakauchi H."/>
            <person name="Ng P."/>
            <person name="Nilsson R."/>
            <person name="Nishiguchi S."/>
            <person name="Nishikawa S."/>
            <person name="Nori F."/>
            <person name="Ohara O."/>
            <person name="Okazaki Y."/>
            <person name="Orlando V."/>
            <person name="Pang K.C."/>
            <person name="Pavan W.J."/>
            <person name="Pavesi G."/>
            <person name="Pesole G."/>
            <person name="Petrovsky N."/>
            <person name="Piazza S."/>
            <person name="Reed J."/>
            <person name="Reid J.F."/>
            <person name="Ring B.Z."/>
            <person name="Ringwald M."/>
            <person name="Rost B."/>
            <person name="Ruan Y."/>
            <person name="Salzberg S.L."/>
            <person name="Sandelin A."/>
            <person name="Schneider C."/>
            <person name="Schoenbach C."/>
            <person name="Sekiguchi K."/>
            <person name="Semple C.A."/>
            <person name="Seno S."/>
            <person name="Sessa L."/>
            <person name="Sheng Y."/>
            <person name="Shibata Y."/>
            <person name="Shimada H."/>
            <person name="Shimada K."/>
            <person name="Silva D."/>
            <person name="Sinclair B."/>
            <person name="Sperling S."/>
            <person name="Stupka E."/>
            <person name="Sugiura K."/>
            <person name="Sultana R."/>
            <person name="Takenaka Y."/>
            <person name="Taki K."/>
            <person name="Tammoja K."/>
            <person name="Tan S.L."/>
            <person name="Tang S."/>
            <person name="Taylor M.S."/>
            <person name="Tegner J."/>
            <person name="Teichmann S.A."/>
            <person name="Ueda H.R."/>
            <person name="van Nimwegen E."/>
            <person name="Verardo R."/>
            <person name="Wei C.L."/>
            <person name="Yagi K."/>
            <person name="Yamanishi H."/>
            <person name="Zabarovsky E."/>
            <person name="Zhu S."/>
            <person name="Zimmer A."/>
            <person name="Hide W."/>
            <person name="Bult C."/>
            <person name="Grimmond S.M."/>
            <person name="Teasdale R.D."/>
            <person name="Liu E.T."/>
            <person name="Brusic V."/>
            <person name="Quackenbush J."/>
            <person name="Wahlestedt C."/>
            <person name="Mattick J.S."/>
            <person name="Hume D.A."/>
            <person name="Kai C."/>
            <person name="Sasaki D."/>
            <person name="Tomaru Y."/>
            <person name="Fukuda S."/>
            <person name="Kanamori-Katayama M."/>
            <person name="Suzuki M."/>
            <person name="Aoki J."/>
            <person name="Arakawa T."/>
            <person name="Iida J."/>
            <person name="Imamura K."/>
            <person name="Itoh M."/>
            <person name="Kato T."/>
            <person name="Kawaji H."/>
            <person name="Kawagashira N."/>
            <person name="Kawashima T."/>
            <person name="Kojima M."/>
            <person name="Kondo S."/>
            <person name="Konno H."/>
            <person name="Nakano K."/>
            <person name="Ninomiya N."/>
            <person name="Nishio T."/>
            <person name="Okada M."/>
            <person name="Plessy C."/>
            <person name="Shibata K."/>
            <person name="Shiraki T."/>
            <person name="Suzuki S."/>
            <person name="Tagami M."/>
            <person name="Waki K."/>
            <person name="Watahiki A."/>
            <person name="Okamura-Oho Y."/>
            <person name="Suzuki H."/>
            <person name="Kawai J."/>
            <person name="Hayashizaki Y."/>
        </authorList>
    </citation>
    <scope>NUCLEOTIDE SEQUENCE [LARGE SCALE MRNA]</scope>
    <source>
        <strain>C57BL/6J</strain>
        <tissue>Adipose tissue</tissue>
        <tissue>Bone marrow</tissue>
    </source>
</reference>
<reference key="3">
    <citation type="journal article" date="2004" name="Genome Res.">
        <title>The status, quality, and expansion of the NIH full-length cDNA project: the Mammalian Gene Collection (MGC).</title>
        <authorList>
            <consortium name="The MGC Project Team"/>
        </authorList>
    </citation>
    <scope>NUCLEOTIDE SEQUENCE [LARGE SCALE MRNA]</scope>
    <source>
        <strain>FVB/N</strain>
        <tissue>Mammary tumor</tissue>
    </source>
</reference>
<reference key="4">
    <citation type="journal article" date="2003" name="Annu. Rev. Biochem.">
        <title>The enzymes, regulation, and genetics of bile acid synthesis.</title>
        <authorList>
            <person name="Russell D.W."/>
        </authorList>
    </citation>
    <scope>DISRUPTION PHENOTYPE</scope>
</reference>
<reference key="5">
    <citation type="journal article" date="2012" name="Immunity">
        <title>Oxysterol gradient generation by lymphoid stromal cells guides activated B cell movement during humoral responses.</title>
        <authorList>
            <person name="Yi T."/>
            <person name="Wang X."/>
            <person name="Kelly L.M."/>
            <person name="An J."/>
            <person name="Xu Y."/>
            <person name="Sailer A.W."/>
            <person name="Gustafsson J.A."/>
            <person name="Russell D.W."/>
            <person name="Cyster J.G."/>
        </authorList>
    </citation>
    <scope>FUNCTION</scope>
</reference>
<reference key="6">
    <citation type="journal article" date="2017" name="Cell">
        <title>Oxysterol restraint of cholesterol synthesis prevents AIM2 inflammasome activation.</title>
        <authorList>
            <person name="Dang E.V."/>
            <person name="McDonald J.G."/>
            <person name="Russell D.W."/>
            <person name="Cyster J.G."/>
        </authorList>
    </citation>
    <scope>FUNCTION</scope>
    <scope>DISRUPTION PHENOTYPE</scope>
</reference>